<gene>
    <name type="ordered locus">NGR_a02460</name>
    <name type="ORF">y4mM</name>
</gene>
<geneLocation type="plasmid">
    <name>sym pNGR234a</name>
</geneLocation>
<accession>P55572</accession>
<evidence type="ECO:0000255" key="1"/>
<evidence type="ECO:0000255" key="2">
    <source>
        <dbReference type="PROSITE-ProRule" id="PRU00648"/>
    </source>
</evidence>
<evidence type="ECO:0000256" key="3">
    <source>
        <dbReference type="SAM" id="MobiDB-lite"/>
    </source>
</evidence>
<evidence type="ECO:0000305" key="4"/>
<comment type="subcellular location">
    <subcellularLocation>
        <location evidence="4">Cell membrane</location>
        <topology evidence="4">Multi-pass membrane protein</topology>
    </subcellularLocation>
</comment>
<comment type="PTM">
    <text>Predicted to be exported by the Tat system. The position of the signal peptide cleavage has not been experimentally proven.</text>
</comment>
<comment type="similarity">
    <text evidence="4">Belongs to the bacterial solute-binding protein 7 family.</text>
</comment>
<feature type="signal peptide" description="Tat-type signal" evidence="2">
    <location>
        <begin position="1"/>
        <end position="55"/>
    </location>
</feature>
<feature type="chain" id="PRO_0000031817" description="Uncharacterized protein y4mM">
    <location>
        <begin position="56"/>
        <end position="541"/>
    </location>
</feature>
<feature type="transmembrane region" description="Helical" evidence="1">
    <location>
        <begin position="379"/>
        <end position="399"/>
    </location>
</feature>
<feature type="transmembrane region" description="Helical" evidence="1">
    <location>
        <begin position="420"/>
        <end position="440"/>
    </location>
</feature>
<feature type="transmembrane region" description="Helical" evidence="1">
    <location>
        <begin position="466"/>
        <end position="486"/>
    </location>
</feature>
<feature type="transmembrane region" description="Helical" evidence="1">
    <location>
        <begin position="500"/>
        <end position="520"/>
    </location>
</feature>
<feature type="region of interest" description="Disordered" evidence="3">
    <location>
        <begin position="339"/>
        <end position="362"/>
    </location>
</feature>
<feature type="compositionally biased region" description="Low complexity" evidence="3">
    <location>
        <begin position="341"/>
        <end position="351"/>
    </location>
</feature>
<organism>
    <name type="scientific">Sinorhizobium fredii (strain NBRC 101917 / NGR234)</name>
    <dbReference type="NCBI Taxonomy" id="394"/>
    <lineage>
        <taxon>Bacteria</taxon>
        <taxon>Pseudomonadati</taxon>
        <taxon>Pseudomonadota</taxon>
        <taxon>Alphaproteobacteria</taxon>
        <taxon>Hyphomicrobiales</taxon>
        <taxon>Rhizobiaceae</taxon>
        <taxon>Sinorhizobium/Ensifer group</taxon>
        <taxon>Sinorhizobium</taxon>
    </lineage>
</organism>
<sequence length="541" mass="57124">MTKTVTRAGGASGPQQFQSGGETMKYEITRRRFLAASSAVLAAPAIVTMVRPARAGTTLTLGHGAAPGNPRTVAAAKFAELVAEKTAGRVTINVAGAETLGSDAAMLTSLRTGALDVTANSQGATSALVPELAALGLPFLFENTAKAMQVLGGPVGAELVKRFEAVGVVPLDWWDNGIRHLTNSKRKVAAPAEVSGMKIRTPADPMTMDIFQALGAATEQIAFGELYVALQQGVVDGQENPLANIDSSKLYEVNKYISLTGHKWESTPFLMSQIAQARLGGDLEAVKAAAKEAGELQRKLSADKDAEVLAAFRRISAIEVTEVDREGFAKATASVVESRRSPSGISSPRSNRQPKAEALSAREHPMKSLSNLVELTARAIVWFARQVVIFSGIALMVFMTANVAARYVLAGGGFSFAQELPVLIFPWFILGGIVLAAHSGGHMAVEWIYDKLRDGARSTAFVAANLVSAGAFLMLGYQAYLVGEIAGIEHSPVLQLPNSVGYFALAVGSVLVAIVTLAVALRVLRLGWDHRTNTESGEVAL</sequence>
<reference key="1">
    <citation type="journal article" date="1997" name="Nature">
        <title>Molecular basis of symbiosis between Rhizobium and legumes.</title>
        <authorList>
            <person name="Freiberg C.A."/>
            <person name="Fellay R."/>
            <person name="Bairoch A."/>
            <person name="Broughton W.J."/>
            <person name="Rosenthal A."/>
            <person name="Perret X."/>
        </authorList>
    </citation>
    <scope>NUCLEOTIDE SEQUENCE [LARGE SCALE GENOMIC DNA]</scope>
    <source>
        <strain>NBRC 101917 / NGR234</strain>
    </source>
</reference>
<reference key="2">
    <citation type="journal article" date="2009" name="Appl. Environ. Microbiol.">
        <title>Rhizobium sp. strain NGR234 possesses a remarkable number of secretion systems.</title>
        <authorList>
            <person name="Schmeisser C."/>
            <person name="Liesegang H."/>
            <person name="Krysciak D."/>
            <person name="Bakkou N."/>
            <person name="Le Quere A."/>
            <person name="Wollherr A."/>
            <person name="Heinemeyer I."/>
            <person name="Morgenstern B."/>
            <person name="Pommerening-Roeser A."/>
            <person name="Flores M."/>
            <person name="Palacios R."/>
            <person name="Brenner S."/>
            <person name="Gottschalk G."/>
            <person name="Schmitz R.A."/>
            <person name="Broughton W.J."/>
            <person name="Perret X."/>
            <person name="Strittmatter A.W."/>
            <person name="Streit W.R."/>
        </authorList>
    </citation>
    <scope>NUCLEOTIDE SEQUENCE [LARGE SCALE GENOMIC DNA]</scope>
    <source>
        <strain>NBRC 101917 / NGR234</strain>
    </source>
</reference>
<dbReference type="EMBL" id="U00090">
    <property type="protein sequence ID" value="AAB91776.1"/>
    <property type="molecule type" value="Genomic_DNA"/>
</dbReference>
<dbReference type="RefSeq" id="NP_443979.1">
    <property type="nucleotide sequence ID" value="NC_000914.2"/>
</dbReference>
<dbReference type="SMR" id="P55572"/>
<dbReference type="KEGG" id="rhi:NGR_a02460"/>
<dbReference type="PATRIC" id="fig|394.7.peg.256"/>
<dbReference type="eggNOG" id="COG1638">
    <property type="taxonomic scope" value="Bacteria"/>
</dbReference>
<dbReference type="HOGENOM" id="CLU_503319_0_0_5"/>
<dbReference type="OrthoDB" id="9803763at2"/>
<dbReference type="Proteomes" id="UP000001054">
    <property type="component" value="Plasmid pNGR234a"/>
</dbReference>
<dbReference type="GO" id="GO:0030288">
    <property type="term" value="C:outer membrane-bounded periplasmic space"/>
    <property type="evidence" value="ECO:0007669"/>
    <property type="project" value="InterPro"/>
</dbReference>
<dbReference type="GO" id="GO:0005886">
    <property type="term" value="C:plasma membrane"/>
    <property type="evidence" value="ECO:0007669"/>
    <property type="project" value="UniProtKB-SubCell"/>
</dbReference>
<dbReference type="GO" id="GO:0055085">
    <property type="term" value="P:transmembrane transport"/>
    <property type="evidence" value="ECO:0007669"/>
    <property type="project" value="InterPro"/>
</dbReference>
<dbReference type="CDD" id="cd13603">
    <property type="entry name" value="PBP2_TRAP_Siap_TeaA_like"/>
    <property type="match status" value="1"/>
</dbReference>
<dbReference type="Gene3D" id="3.40.190.170">
    <property type="entry name" value="Bacterial extracellular solute-binding protein, family 7"/>
    <property type="match status" value="1"/>
</dbReference>
<dbReference type="InterPro" id="IPR018389">
    <property type="entry name" value="DctP_fam"/>
</dbReference>
<dbReference type="InterPro" id="IPR055348">
    <property type="entry name" value="DctQ"/>
</dbReference>
<dbReference type="InterPro" id="IPR006311">
    <property type="entry name" value="TAT_signal"/>
</dbReference>
<dbReference type="InterPro" id="IPR004682">
    <property type="entry name" value="TRAP_DctP"/>
</dbReference>
<dbReference type="InterPro" id="IPR038404">
    <property type="entry name" value="TRAP_DctP_sf"/>
</dbReference>
<dbReference type="NCBIfam" id="TIGR00787">
    <property type="entry name" value="dctP"/>
    <property type="match status" value="1"/>
</dbReference>
<dbReference type="NCBIfam" id="NF037995">
    <property type="entry name" value="TRAP_S1"/>
    <property type="match status" value="1"/>
</dbReference>
<dbReference type="PANTHER" id="PTHR33376">
    <property type="match status" value="1"/>
</dbReference>
<dbReference type="PANTHER" id="PTHR33376:SF4">
    <property type="entry name" value="SIALIC ACID-BINDING PERIPLASMIC PROTEIN SIAP"/>
    <property type="match status" value="1"/>
</dbReference>
<dbReference type="Pfam" id="PF03480">
    <property type="entry name" value="DctP"/>
    <property type="match status" value="1"/>
</dbReference>
<dbReference type="Pfam" id="PF04290">
    <property type="entry name" value="DctQ"/>
    <property type="match status" value="1"/>
</dbReference>
<dbReference type="PROSITE" id="PS51318">
    <property type="entry name" value="TAT"/>
    <property type="match status" value="1"/>
</dbReference>
<protein>
    <recommendedName>
        <fullName>Uncharacterized protein y4mM</fullName>
    </recommendedName>
</protein>
<keyword id="KW-1003">Cell membrane</keyword>
<keyword id="KW-0472">Membrane</keyword>
<keyword id="KW-0614">Plasmid</keyword>
<keyword id="KW-1185">Reference proteome</keyword>
<keyword id="KW-0732">Signal</keyword>
<keyword id="KW-0812">Transmembrane</keyword>
<keyword id="KW-1133">Transmembrane helix</keyword>
<keyword id="KW-0813">Transport</keyword>
<name>Y4MM_SINFN</name>
<proteinExistence type="inferred from homology"/>